<organism>
    <name type="scientific">Schizosaccharomyces pombe (strain 972 / ATCC 24843)</name>
    <name type="common">Fission yeast</name>
    <dbReference type="NCBI Taxonomy" id="284812"/>
    <lineage>
        <taxon>Eukaryota</taxon>
        <taxon>Fungi</taxon>
        <taxon>Dikarya</taxon>
        <taxon>Ascomycota</taxon>
        <taxon>Taphrinomycotina</taxon>
        <taxon>Schizosaccharomycetes</taxon>
        <taxon>Schizosaccharomycetales</taxon>
        <taxon>Schizosaccharomycetaceae</taxon>
        <taxon>Schizosaccharomyces</taxon>
    </lineage>
</organism>
<feature type="chain" id="PRO_0000116802" description="Protein urg3">
    <location>
        <begin position="1"/>
        <end position="399"/>
    </location>
</feature>
<feature type="sequence conflict" description="In Ref. 1; BAA13781." evidence="1" ref="1">
    <original>E</original>
    <variation>D</variation>
    <location>
        <position position="324"/>
    </location>
</feature>
<keyword id="KW-1185">Reference proteome</keyword>
<sequence length="399" mass="44211">MSTETVAKLLSLQDIRYKAQKVLQKAESQSLKSFLYDPSKLPEVADFVVSVIQADFKGKYSTIPPHGRWQHFEVGNVPRLSQLVSKWEKEGVDSLEICKRVLDVTFVSVLLDAGAGDVWKYTDGKEAYGRSEGLAVASLRCFESGLFSSNPDFVYQVDGKALQALTSEKLGAGFQVTEQNPLAGVEGRATILRSLGKQLGSGRPSDFVGRIFPTGDFSKGLNVLELWSELQTLLIPIWPVRTSFEGQNLGDAWYLSTIDAIQPFHKLTQWLTYSLLIPFKSLLKVPVVNEELLTGLPEYRNGGLFVDLGVLTLRPEFSYATEYEPSSVTIVEWRAMTVVLLDKLLAFVNERLKPELSEPLSLAQMLEAGSWKSGRIIAKKLRPSTAGSPILIKSDGTLF</sequence>
<name>URG3_SCHPO</name>
<accession>Q9US42</accession>
<accession>P78771</accession>
<comment type="similarity">
    <text evidence="1">Belongs to the URC4/urg3 family.</text>
</comment>
<dbReference type="EMBL" id="D89119">
    <property type="protein sequence ID" value="BAA13781.1"/>
    <property type="molecule type" value="mRNA"/>
</dbReference>
<dbReference type="EMBL" id="CU329670">
    <property type="protein sequence ID" value="CAB65618.1"/>
    <property type="molecule type" value="Genomic_DNA"/>
</dbReference>
<dbReference type="PIR" id="T42242">
    <property type="entry name" value="T42242"/>
</dbReference>
<dbReference type="RefSeq" id="NP_593506.1">
    <property type="nucleotide sequence ID" value="NM_001018940.2"/>
</dbReference>
<dbReference type="BioGRID" id="279689">
    <property type="interactions" value="2"/>
</dbReference>
<dbReference type="STRING" id="284812.Q9US42"/>
<dbReference type="iPTMnet" id="Q9US42"/>
<dbReference type="PaxDb" id="4896-SPAC1002.18.1"/>
<dbReference type="EnsemblFungi" id="SPAC1002.18.1">
    <property type="protein sequence ID" value="SPAC1002.18.1:pep"/>
    <property type="gene ID" value="SPAC1002.18"/>
</dbReference>
<dbReference type="GeneID" id="2543261"/>
<dbReference type="KEGG" id="spo:2543261"/>
<dbReference type="PomBase" id="SPAC1002.18">
    <property type="gene designation" value="urg3"/>
</dbReference>
<dbReference type="VEuPathDB" id="FungiDB:SPAC1002.18"/>
<dbReference type="eggNOG" id="ENOG502QR4F">
    <property type="taxonomic scope" value="Eukaryota"/>
</dbReference>
<dbReference type="HOGENOM" id="CLU_026445_1_0_1"/>
<dbReference type="InParanoid" id="Q9US42"/>
<dbReference type="OMA" id="GPDKYHL"/>
<dbReference type="PhylomeDB" id="Q9US42"/>
<dbReference type="PRO" id="PR:Q9US42"/>
<dbReference type="Proteomes" id="UP000002485">
    <property type="component" value="Chromosome I"/>
</dbReference>
<dbReference type="GO" id="GO:0005829">
    <property type="term" value="C:cytosol"/>
    <property type="evidence" value="ECO:0007005"/>
    <property type="project" value="PomBase"/>
</dbReference>
<dbReference type="GO" id="GO:0005634">
    <property type="term" value="C:nucleus"/>
    <property type="evidence" value="ECO:0007005"/>
    <property type="project" value="PomBase"/>
</dbReference>
<dbReference type="GO" id="GO:0003824">
    <property type="term" value="F:catalytic activity"/>
    <property type="evidence" value="ECO:0000303"/>
    <property type="project" value="PomBase"/>
</dbReference>
<dbReference type="InterPro" id="IPR012469">
    <property type="entry name" value="DUF1688"/>
</dbReference>
<dbReference type="PANTHER" id="PTHR31687">
    <property type="match status" value="1"/>
</dbReference>
<dbReference type="PANTHER" id="PTHR31687:SF3">
    <property type="entry name" value="PROTEIN URG3"/>
    <property type="match status" value="1"/>
</dbReference>
<dbReference type="Pfam" id="PF07958">
    <property type="entry name" value="DUF1688"/>
    <property type="match status" value="1"/>
</dbReference>
<evidence type="ECO:0000305" key="1"/>
<proteinExistence type="evidence at transcript level"/>
<gene>
    <name type="primary">urg3</name>
    <name type="ORF">SPAC1002.18</name>
</gene>
<protein>
    <recommendedName>
        <fullName>Protein urg3</fullName>
    </recommendedName>
</protein>
<reference key="1">
    <citation type="journal article" date="1997" name="DNA Res.">
        <title>Identification of open reading frames in Schizosaccharomyces pombe cDNAs.</title>
        <authorList>
            <person name="Yoshioka S."/>
            <person name="Kato K."/>
            <person name="Nakai K."/>
            <person name="Okayama H."/>
            <person name="Nojima H."/>
        </authorList>
    </citation>
    <scope>NUCLEOTIDE SEQUENCE [LARGE SCALE MRNA]</scope>
    <source>
        <strain>PR745</strain>
    </source>
</reference>
<reference key="2">
    <citation type="journal article" date="2002" name="Nature">
        <title>The genome sequence of Schizosaccharomyces pombe.</title>
        <authorList>
            <person name="Wood V."/>
            <person name="Gwilliam R."/>
            <person name="Rajandream M.A."/>
            <person name="Lyne M.H."/>
            <person name="Lyne R."/>
            <person name="Stewart A."/>
            <person name="Sgouros J.G."/>
            <person name="Peat N."/>
            <person name="Hayles J."/>
            <person name="Baker S.G."/>
            <person name="Basham D."/>
            <person name="Bowman S."/>
            <person name="Brooks K."/>
            <person name="Brown D."/>
            <person name="Brown S."/>
            <person name="Chillingworth T."/>
            <person name="Churcher C.M."/>
            <person name="Collins M."/>
            <person name="Connor R."/>
            <person name="Cronin A."/>
            <person name="Davis P."/>
            <person name="Feltwell T."/>
            <person name="Fraser A."/>
            <person name="Gentles S."/>
            <person name="Goble A."/>
            <person name="Hamlin N."/>
            <person name="Harris D.E."/>
            <person name="Hidalgo J."/>
            <person name="Hodgson G."/>
            <person name="Holroyd S."/>
            <person name="Hornsby T."/>
            <person name="Howarth S."/>
            <person name="Huckle E.J."/>
            <person name="Hunt S."/>
            <person name="Jagels K."/>
            <person name="James K.D."/>
            <person name="Jones L."/>
            <person name="Jones M."/>
            <person name="Leather S."/>
            <person name="McDonald S."/>
            <person name="McLean J."/>
            <person name="Mooney P."/>
            <person name="Moule S."/>
            <person name="Mungall K.L."/>
            <person name="Murphy L.D."/>
            <person name="Niblett D."/>
            <person name="Odell C."/>
            <person name="Oliver K."/>
            <person name="O'Neil S."/>
            <person name="Pearson D."/>
            <person name="Quail M.A."/>
            <person name="Rabbinowitsch E."/>
            <person name="Rutherford K.M."/>
            <person name="Rutter S."/>
            <person name="Saunders D."/>
            <person name="Seeger K."/>
            <person name="Sharp S."/>
            <person name="Skelton J."/>
            <person name="Simmonds M.N."/>
            <person name="Squares R."/>
            <person name="Squares S."/>
            <person name="Stevens K."/>
            <person name="Taylor K."/>
            <person name="Taylor R.G."/>
            <person name="Tivey A."/>
            <person name="Walsh S.V."/>
            <person name="Warren T."/>
            <person name="Whitehead S."/>
            <person name="Woodward J.R."/>
            <person name="Volckaert G."/>
            <person name="Aert R."/>
            <person name="Robben J."/>
            <person name="Grymonprez B."/>
            <person name="Weltjens I."/>
            <person name="Vanstreels E."/>
            <person name="Rieger M."/>
            <person name="Schaefer M."/>
            <person name="Mueller-Auer S."/>
            <person name="Gabel C."/>
            <person name="Fuchs M."/>
            <person name="Duesterhoeft A."/>
            <person name="Fritzc C."/>
            <person name="Holzer E."/>
            <person name="Moestl D."/>
            <person name="Hilbert H."/>
            <person name="Borzym K."/>
            <person name="Langer I."/>
            <person name="Beck A."/>
            <person name="Lehrach H."/>
            <person name="Reinhardt R."/>
            <person name="Pohl T.M."/>
            <person name="Eger P."/>
            <person name="Zimmermann W."/>
            <person name="Wedler H."/>
            <person name="Wambutt R."/>
            <person name="Purnelle B."/>
            <person name="Goffeau A."/>
            <person name="Cadieu E."/>
            <person name="Dreano S."/>
            <person name="Gloux S."/>
            <person name="Lelaure V."/>
            <person name="Mottier S."/>
            <person name="Galibert F."/>
            <person name="Aves S.J."/>
            <person name="Xiang Z."/>
            <person name="Hunt C."/>
            <person name="Moore K."/>
            <person name="Hurst S.M."/>
            <person name="Lucas M."/>
            <person name="Rochet M."/>
            <person name="Gaillardin C."/>
            <person name="Tallada V.A."/>
            <person name="Garzon A."/>
            <person name="Thode G."/>
            <person name="Daga R.R."/>
            <person name="Cruzado L."/>
            <person name="Jimenez J."/>
            <person name="Sanchez M."/>
            <person name="del Rey F."/>
            <person name="Benito J."/>
            <person name="Dominguez A."/>
            <person name="Revuelta J.L."/>
            <person name="Moreno S."/>
            <person name="Armstrong J."/>
            <person name="Forsburg S.L."/>
            <person name="Cerutti L."/>
            <person name="Lowe T."/>
            <person name="McCombie W.R."/>
            <person name="Paulsen I."/>
            <person name="Potashkin J."/>
            <person name="Shpakovski G.V."/>
            <person name="Ussery D."/>
            <person name="Barrell B.G."/>
            <person name="Nurse P."/>
        </authorList>
    </citation>
    <scope>NUCLEOTIDE SEQUENCE [LARGE SCALE GENOMIC DNA]</scope>
    <source>
        <strain>972 / ATCC 24843</strain>
    </source>
</reference>